<proteinExistence type="inferred from homology"/>
<sequence length="147" mass="16239">MFRGGTPVSLDNKGRLAVPARYRETLISLCAGHLIVTADPSKCLLIYPQPVWEPIEQKLNSLSSFNPQTRSLQRLLVGNACDVEMDGVGRILVPPSLRAFAGLNKEVVLVGQGAKFELWDSEKWNLQMESALAFRDGIPQELEGFSL</sequence>
<accession>Q2Y629</accession>
<evidence type="ECO:0000255" key="1">
    <source>
        <dbReference type="HAMAP-Rule" id="MF_01008"/>
    </source>
</evidence>
<evidence type="ECO:0000255" key="2">
    <source>
        <dbReference type="PROSITE-ProRule" id="PRU01076"/>
    </source>
</evidence>
<gene>
    <name evidence="1" type="primary">mraZ</name>
    <name type="ordered locus">Nmul_A2503</name>
</gene>
<feature type="chain" id="PRO_0000230095" description="Transcriptional regulator MraZ">
    <location>
        <begin position="1"/>
        <end position="147"/>
    </location>
</feature>
<feature type="domain" description="SpoVT-AbrB 1" evidence="2">
    <location>
        <begin position="5"/>
        <end position="51"/>
    </location>
</feature>
<feature type="domain" description="SpoVT-AbrB 2" evidence="2">
    <location>
        <begin position="80"/>
        <end position="123"/>
    </location>
</feature>
<keyword id="KW-0963">Cytoplasm</keyword>
<keyword id="KW-0238">DNA-binding</keyword>
<keyword id="KW-1185">Reference proteome</keyword>
<keyword id="KW-0677">Repeat</keyword>
<keyword id="KW-0804">Transcription</keyword>
<keyword id="KW-0805">Transcription regulation</keyword>
<comment type="subunit">
    <text evidence="1">Forms oligomers.</text>
</comment>
<comment type="subcellular location">
    <subcellularLocation>
        <location evidence="1">Cytoplasm</location>
        <location evidence="1">Nucleoid</location>
    </subcellularLocation>
</comment>
<comment type="similarity">
    <text evidence="1">Belongs to the MraZ family.</text>
</comment>
<dbReference type="EMBL" id="CP000103">
    <property type="protein sequence ID" value="ABB75792.1"/>
    <property type="molecule type" value="Genomic_DNA"/>
</dbReference>
<dbReference type="RefSeq" id="WP_011381791.1">
    <property type="nucleotide sequence ID" value="NC_007614.1"/>
</dbReference>
<dbReference type="SMR" id="Q2Y629"/>
<dbReference type="STRING" id="323848.Nmul_A2503"/>
<dbReference type="KEGG" id="nmu:Nmul_A2503"/>
<dbReference type="eggNOG" id="COG2001">
    <property type="taxonomic scope" value="Bacteria"/>
</dbReference>
<dbReference type="HOGENOM" id="CLU_107907_2_0_4"/>
<dbReference type="OrthoDB" id="9807753at2"/>
<dbReference type="Proteomes" id="UP000002718">
    <property type="component" value="Chromosome"/>
</dbReference>
<dbReference type="GO" id="GO:0005737">
    <property type="term" value="C:cytoplasm"/>
    <property type="evidence" value="ECO:0007669"/>
    <property type="project" value="UniProtKB-UniRule"/>
</dbReference>
<dbReference type="GO" id="GO:0009295">
    <property type="term" value="C:nucleoid"/>
    <property type="evidence" value="ECO:0007669"/>
    <property type="project" value="UniProtKB-SubCell"/>
</dbReference>
<dbReference type="GO" id="GO:0003700">
    <property type="term" value="F:DNA-binding transcription factor activity"/>
    <property type="evidence" value="ECO:0007669"/>
    <property type="project" value="UniProtKB-UniRule"/>
</dbReference>
<dbReference type="GO" id="GO:0000976">
    <property type="term" value="F:transcription cis-regulatory region binding"/>
    <property type="evidence" value="ECO:0007669"/>
    <property type="project" value="TreeGrafter"/>
</dbReference>
<dbReference type="GO" id="GO:2000143">
    <property type="term" value="P:negative regulation of DNA-templated transcription initiation"/>
    <property type="evidence" value="ECO:0007669"/>
    <property type="project" value="TreeGrafter"/>
</dbReference>
<dbReference type="CDD" id="cd16321">
    <property type="entry name" value="MraZ_C"/>
    <property type="match status" value="1"/>
</dbReference>
<dbReference type="CDD" id="cd16320">
    <property type="entry name" value="MraZ_N"/>
    <property type="match status" value="1"/>
</dbReference>
<dbReference type="Gene3D" id="3.40.1550.20">
    <property type="entry name" value="Transcriptional regulator MraZ domain"/>
    <property type="match status" value="1"/>
</dbReference>
<dbReference type="HAMAP" id="MF_01008">
    <property type="entry name" value="MraZ"/>
    <property type="match status" value="1"/>
</dbReference>
<dbReference type="InterPro" id="IPR003444">
    <property type="entry name" value="MraZ"/>
</dbReference>
<dbReference type="InterPro" id="IPR035644">
    <property type="entry name" value="MraZ_C"/>
</dbReference>
<dbReference type="InterPro" id="IPR020603">
    <property type="entry name" value="MraZ_dom"/>
</dbReference>
<dbReference type="InterPro" id="IPR035642">
    <property type="entry name" value="MraZ_N"/>
</dbReference>
<dbReference type="InterPro" id="IPR038619">
    <property type="entry name" value="MraZ_sf"/>
</dbReference>
<dbReference type="InterPro" id="IPR007159">
    <property type="entry name" value="SpoVT-AbrB_dom"/>
</dbReference>
<dbReference type="InterPro" id="IPR037914">
    <property type="entry name" value="SpoVT-AbrB_sf"/>
</dbReference>
<dbReference type="NCBIfam" id="TIGR00242">
    <property type="entry name" value="division/cell wall cluster transcriptional repressor MraZ"/>
    <property type="match status" value="1"/>
</dbReference>
<dbReference type="PANTHER" id="PTHR34701">
    <property type="entry name" value="TRANSCRIPTIONAL REGULATOR MRAZ"/>
    <property type="match status" value="1"/>
</dbReference>
<dbReference type="PANTHER" id="PTHR34701:SF1">
    <property type="entry name" value="TRANSCRIPTIONAL REGULATOR MRAZ"/>
    <property type="match status" value="1"/>
</dbReference>
<dbReference type="Pfam" id="PF02381">
    <property type="entry name" value="MraZ"/>
    <property type="match status" value="2"/>
</dbReference>
<dbReference type="SUPFAM" id="SSF89447">
    <property type="entry name" value="AbrB/MazE/MraZ-like"/>
    <property type="match status" value="1"/>
</dbReference>
<dbReference type="PROSITE" id="PS51740">
    <property type="entry name" value="SPOVT_ABRB"/>
    <property type="match status" value="2"/>
</dbReference>
<organism>
    <name type="scientific">Nitrosospira multiformis (strain ATCC 25196 / NCIMB 11849 / C 71)</name>
    <dbReference type="NCBI Taxonomy" id="323848"/>
    <lineage>
        <taxon>Bacteria</taxon>
        <taxon>Pseudomonadati</taxon>
        <taxon>Pseudomonadota</taxon>
        <taxon>Betaproteobacteria</taxon>
        <taxon>Nitrosomonadales</taxon>
        <taxon>Nitrosomonadaceae</taxon>
        <taxon>Nitrosospira</taxon>
    </lineage>
</organism>
<name>MRAZ_NITMU</name>
<reference key="1">
    <citation type="submission" date="2005-08" db="EMBL/GenBank/DDBJ databases">
        <title>Complete sequence of chromosome 1 of Nitrosospira multiformis ATCC 25196.</title>
        <authorList>
            <person name="Copeland A."/>
            <person name="Lucas S."/>
            <person name="Lapidus A."/>
            <person name="Barry K."/>
            <person name="Detter J.C."/>
            <person name="Glavina T."/>
            <person name="Hammon N."/>
            <person name="Israni S."/>
            <person name="Pitluck S."/>
            <person name="Chain P."/>
            <person name="Malfatti S."/>
            <person name="Shin M."/>
            <person name="Vergez L."/>
            <person name="Schmutz J."/>
            <person name="Larimer F."/>
            <person name="Land M."/>
            <person name="Hauser L."/>
            <person name="Kyrpides N."/>
            <person name="Lykidis A."/>
            <person name="Richardson P."/>
        </authorList>
    </citation>
    <scope>NUCLEOTIDE SEQUENCE [LARGE SCALE GENOMIC DNA]</scope>
    <source>
        <strain>ATCC 25196 / NCIMB 11849 / C 71</strain>
    </source>
</reference>
<protein>
    <recommendedName>
        <fullName>Transcriptional regulator MraZ</fullName>
    </recommendedName>
</protein>